<gene>
    <name type="primary">ZNF501</name>
</gene>
<proteinExistence type="evidence at transcript level"/>
<feature type="chain" id="PRO_0000047622" description="Zinc finger protein 501">
    <location>
        <begin position="1"/>
        <end position="271"/>
    </location>
</feature>
<feature type="zinc finger region" description="C2H2-type 1" evidence="2">
    <location>
        <begin position="22"/>
        <end position="44"/>
    </location>
</feature>
<feature type="zinc finger region" description="C2H2-type 2" evidence="2">
    <location>
        <begin position="50"/>
        <end position="72"/>
    </location>
</feature>
<feature type="zinc finger region" description="C2H2-type 3" evidence="2">
    <location>
        <begin position="78"/>
        <end position="100"/>
    </location>
</feature>
<feature type="zinc finger region" description="C2H2-type 4" evidence="2">
    <location>
        <begin position="106"/>
        <end position="128"/>
    </location>
</feature>
<feature type="zinc finger region" description="C2H2-type 5" evidence="2">
    <location>
        <begin position="134"/>
        <end position="156"/>
    </location>
</feature>
<feature type="zinc finger region" description="C2H2-type 6" evidence="2">
    <location>
        <begin position="162"/>
        <end position="184"/>
    </location>
</feature>
<feature type="zinc finger region" description="C2H2-type 7" evidence="2">
    <location>
        <begin position="190"/>
        <end position="212"/>
    </location>
</feature>
<feature type="zinc finger region" description="C2H2-type 8" evidence="2">
    <location>
        <begin position="218"/>
        <end position="240"/>
    </location>
</feature>
<feature type="zinc finger region" description="C2H2-type 9" evidence="2">
    <location>
        <begin position="246"/>
        <end position="268"/>
    </location>
</feature>
<evidence type="ECO:0000250" key="1">
    <source>
        <dbReference type="UniProtKB" id="Q96CX3"/>
    </source>
</evidence>
<evidence type="ECO:0000255" key="2">
    <source>
        <dbReference type="PROSITE-ProRule" id="PRU00042"/>
    </source>
</evidence>
<evidence type="ECO:0000305" key="3"/>
<protein>
    <recommendedName>
        <fullName>Zinc finger protein 501</fullName>
    </recommendedName>
</protein>
<sequence length="271" mass="31183">MNSSQISLKMKHGRVNMQKKPSKCSECGRFFTQRSSLTQHQRIHRGEKPYVCSECGSCFRKQSNLTQHLRIHTGEKPYKCNECEKAFQTKAILVQHLRIHTGEKPYKCNECGKAFCQSPSLIKHQRIHTGEKPYKCAECGKAFSQSVCLTRHQRSHSGDKPFKCNECGKAFNQSACLMQHQRIHSGEKPYTCTECGKAFTQNSSLVEHERTHTGEKLYKCSECEKTFRKQAHLSEHYRIHTGEKPYECFGCGKSFRHSSALLRHQRLHAGE</sequence>
<dbReference type="EMBL" id="CR857291">
    <property type="protein sequence ID" value="CAH89587.1"/>
    <property type="status" value="ALT_INIT"/>
    <property type="molecule type" value="mRNA"/>
</dbReference>
<dbReference type="RefSeq" id="NP_001127171.1">
    <property type="nucleotide sequence ID" value="NM_001133699.1"/>
</dbReference>
<dbReference type="SMR" id="Q5RF70"/>
<dbReference type="STRING" id="9601.ENSPPYP00000015609"/>
<dbReference type="Ensembl" id="ENSPPYT00000016230.2">
    <property type="protein sequence ID" value="ENSPPYP00000015609.1"/>
    <property type="gene ID" value="ENSPPYG00000013955.3"/>
</dbReference>
<dbReference type="GeneID" id="100174223"/>
<dbReference type="KEGG" id="pon:100174223"/>
<dbReference type="CTD" id="115560"/>
<dbReference type="eggNOG" id="KOG1721">
    <property type="taxonomic scope" value="Eukaryota"/>
</dbReference>
<dbReference type="GeneTree" id="ENSGT00940000153104"/>
<dbReference type="HOGENOM" id="CLU_002678_2_1_1"/>
<dbReference type="InParanoid" id="Q5RF70"/>
<dbReference type="OMA" id="GSCFCKQ"/>
<dbReference type="OrthoDB" id="8113227at2759"/>
<dbReference type="TreeFam" id="TF337055"/>
<dbReference type="Proteomes" id="UP000001595">
    <property type="component" value="Chromosome 3"/>
</dbReference>
<dbReference type="GO" id="GO:0005730">
    <property type="term" value="C:nucleolus"/>
    <property type="evidence" value="ECO:0007669"/>
    <property type="project" value="UniProtKB-SubCell"/>
</dbReference>
<dbReference type="GO" id="GO:0005654">
    <property type="term" value="C:nucleoplasm"/>
    <property type="evidence" value="ECO:0007669"/>
    <property type="project" value="TreeGrafter"/>
</dbReference>
<dbReference type="GO" id="GO:0005634">
    <property type="term" value="C:nucleus"/>
    <property type="evidence" value="ECO:0000250"/>
    <property type="project" value="UniProtKB"/>
</dbReference>
<dbReference type="GO" id="GO:0001227">
    <property type="term" value="F:DNA-binding transcription repressor activity, RNA polymerase II-specific"/>
    <property type="evidence" value="ECO:0007669"/>
    <property type="project" value="TreeGrafter"/>
</dbReference>
<dbReference type="GO" id="GO:0000978">
    <property type="term" value="F:RNA polymerase II cis-regulatory region sequence-specific DNA binding"/>
    <property type="evidence" value="ECO:0007669"/>
    <property type="project" value="TreeGrafter"/>
</dbReference>
<dbReference type="GO" id="GO:0008270">
    <property type="term" value="F:zinc ion binding"/>
    <property type="evidence" value="ECO:0007669"/>
    <property type="project" value="UniProtKB-KW"/>
</dbReference>
<dbReference type="GO" id="GO:0007030">
    <property type="term" value="P:Golgi organization"/>
    <property type="evidence" value="ECO:0000250"/>
    <property type="project" value="UniProtKB"/>
</dbReference>
<dbReference type="GO" id="GO:0001817">
    <property type="term" value="P:regulation of cytokine production"/>
    <property type="evidence" value="ECO:0007669"/>
    <property type="project" value="TreeGrafter"/>
</dbReference>
<dbReference type="GO" id="GO:0002682">
    <property type="term" value="P:regulation of immune system process"/>
    <property type="evidence" value="ECO:0007669"/>
    <property type="project" value="TreeGrafter"/>
</dbReference>
<dbReference type="FunFam" id="3.30.160.60:FF:001478">
    <property type="entry name" value="Zinc finger protein 134"/>
    <property type="match status" value="1"/>
</dbReference>
<dbReference type="FunFam" id="3.30.160.60:FF:000352">
    <property type="entry name" value="zinc finger protein 3 homolog"/>
    <property type="match status" value="1"/>
</dbReference>
<dbReference type="FunFam" id="3.30.160.60:FF:002343">
    <property type="entry name" value="Zinc finger protein 33A"/>
    <property type="match status" value="1"/>
</dbReference>
<dbReference type="FunFam" id="3.30.160.60:FF:001498">
    <property type="entry name" value="Zinc finger protein 404"/>
    <property type="match status" value="1"/>
</dbReference>
<dbReference type="FunFam" id="3.30.160.60:FF:002090">
    <property type="entry name" value="Zinc finger protein 473"/>
    <property type="match status" value="2"/>
</dbReference>
<dbReference type="FunFam" id="3.30.160.60:FF:001611">
    <property type="entry name" value="Zinc finger protein 501"/>
    <property type="match status" value="1"/>
</dbReference>
<dbReference type="FunFam" id="3.30.160.60:FF:001880">
    <property type="entry name" value="zinc finger protein 69 homolog isoform X2"/>
    <property type="match status" value="1"/>
</dbReference>
<dbReference type="FunFam" id="3.30.160.60:FF:001442">
    <property type="entry name" value="zinc finger protein 696"/>
    <property type="match status" value="1"/>
</dbReference>
<dbReference type="Gene3D" id="3.30.160.60">
    <property type="entry name" value="Classic Zinc Finger"/>
    <property type="match status" value="9"/>
</dbReference>
<dbReference type="InterPro" id="IPR036236">
    <property type="entry name" value="Znf_C2H2_sf"/>
</dbReference>
<dbReference type="InterPro" id="IPR013087">
    <property type="entry name" value="Znf_C2H2_type"/>
</dbReference>
<dbReference type="PANTHER" id="PTHR24399:SF54">
    <property type="entry name" value="GASTRULA ZINC FINGER PROTEIN XLCGF26.1-LIKE-RELATED"/>
    <property type="match status" value="1"/>
</dbReference>
<dbReference type="PANTHER" id="PTHR24399">
    <property type="entry name" value="ZINC FINGER AND BTB DOMAIN-CONTAINING"/>
    <property type="match status" value="1"/>
</dbReference>
<dbReference type="Pfam" id="PF00096">
    <property type="entry name" value="zf-C2H2"/>
    <property type="match status" value="9"/>
</dbReference>
<dbReference type="SMART" id="SM00355">
    <property type="entry name" value="ZnF_C2H2"/>
    <property type="match status" value="9"/>
</dbReference>
<dbReference type="SUPFAM" id="SSF57667">
    <property type="entry name" value="beta-beta-alpha zinc fingers"/>
    <property type="match status" value="5"/>
</dbReference>
<dbReference type="PROSITE" id="PS00028">
    <property type="entry name" value="ZINC_FINGER_C2H2_1"/>
    <property type="match status" value="9"/>
</dbReference>
<dbReference type="PROSITE" id="PS50157">
    <property type="entry name" value="ZINC_FINGER_C2H2_2"/>
    <property type="match status" value="9"/>
</dbReference>
<reference key="1">
    <citation type="submission" date="2004-11" db="EMBL/GenBank/DDBJ databases">
        <authorList>
            <consortium name="The German cDNA consortium"/>
        </authorList>
    </citation>
    <scope>NUCLEOTIDE SEQUENCE [LARGE SCALE MRNA]</scope>
    <source>
        <tissue>Kidney</tissue>
    </source>
</reference>
<name>ZN501_PONAB</name>
<keyword id="KW-0238">DNA-binding</keyword>
<keyword id="KW-0479">Metal-binding</keyword>
<keyword id="KW-0539">Nucleus</keyword>
<keyword id="KW-1185">Reference proteome</keyword>
<keyword id="KW-0677">Repeat</keyword>
<keyword id="KW-0804">Transcription</keyword>
<keyword id="KW-0805">Transcription regulation</keyword>
<keyword id="KW-0862">Zinc</keyword>
<keyword id="KW-0863">Zinc-finger</keyword>
<accession>Q5RF70</accession>
<organism>
    <name type="scientific">Pongo abelii</name>
    <name type="common">Sumatran orangutan</name>
    <name type="synonym">Pongo pygmaeus abelii</name>
    <dbReference type="NCBI Taxonomy" id="9601"/>
    <lineage>
        <taxon>Eukaryota</taxon>
        <taxon>Metazoa</taxon>
        <taxon>Chordata</taxon>
        <taxon>Craniata</taxon>
        <taxon>Vertebrata</taxon>
        <taxon>Euteleostomi</taxon>
        <taxon>Mammalia</taxon>
        <taxon>Eutheria</taxon>
        <taxon>Euarchontoglires</taxon>
        <taxon>Primates</taxon>
        <taxon>Haplorrhini</taxon>
        <taxon>Catarrhini</taxon>
        <taxon>Hominidae</taxon>
        <taxon>Pongo</taxon>
    </lineage>
</organism>
<comment type="function">
    <text evidence="1">May be involved in transcriptional regulation (By similarity). Essential for Golgi structural integrity (By similarity).</text>
</comment>
<comment type="subcellular location">
    <subcellularLocation>
        <location evidence="1">Nucleus</location>
    </subcellularLocation>
    <subcellularLocation>
        <location evidence="1">Nucleus</location>
        <location evidence="1">Nucleolus</location>
    </subcellularLocation>
</comment>
<comment type="similarity">
    <text evidence="3">Belongs to the krueppel C2H2-type zinc-finger protein family.</text>
</comment>
<comment type="sequence caution" evidence="3">
    <conflict type="erroneous initiation">
        <sequence resource="EMBL-CDS" id="CAH89587"/>
    </conflict>
</comment>